<evidence type="ECO:0000255" key="1">
    <source>
        <dbReference type="HAMAP-Rule" id="MF_00040"/>
    </source>
</evidence>
<evidence type="ECO:0007829" key="2">
    <source>
        <dbReference type="PDB" id="1GE9"/>
    </source>
</evidence>
<accession>O66928</accession>
<reference key="1">
    <citation type="journal article" date="1998" name="Nature">
        <title>The complete genome of the hyperthermophilic bacterium Aquifex aeolicus.</title>
        <authorList>
            <person name="Deckert G."/>
            <person name="Warren P.V."/>
            <person name="Gaasterland T."/>
            <person name="Young W.G."/>
            <person name="Lenox A.L."/>
            <person name="Graham D.E."/>
            <person name="Overbeek R."/>
            <person name="Snead M.A."/>
            <person name="Keller M."/>
            <person name="Aujay M."/>
            <person name="Huber R."/>
            <person name="Feldman R.A."/>
            <person name="Short J.M."/>
            <person name="Olsen G.J."/>
            <person name="Swanson R.V."/>
        </authorList>
    </citation>
    <scope>NUCLEOTIDE SEQUENCE [LARGE SCALE GENOMIC DNA]</scope>
    <source>
        <strain>VF5</strain>
    </source>
</reference>
<keyword id="KW-0002">3D-structure</keyword>
<keyword id="KW-0963">Cytoplasm</keyword>
<keyword id="KW-0648">Protein biosynthesis</keyword>
<keyword id="KW-1185">Reference proteome</keyword>
<proteinExistence type="evidence at protein level"/>
<protein>
    <recommendedName>
        <fullName evidence="1">Ribosome-recycling factor</fullName>
        <shortName evidence="1">RRF</shortName>
    </recommendedName>
    <alternativeName>
        <fullName evidence="1">Ribosome-releasing factor</fullName>
    </alternativeName>
</protein>
<organism>
    <name type="scientific">Aquifex aeolicus (strain VF5)</name>
    <dbReference type="NCBI Taxonomy" id="224324"/>
    <lineage>
        <taxon>Bacteria</taxon>
        <taxon>Pseudomonadati</taxon>
        <taxon>Aquificota</taxon>
        <taxon>Aquificia</taxon>
        <taxon>Aquificales</taxon>
        <taxon>Aquificaceae</taxon>
        <taxon>Aquifex</taxon>
    </lineage>
</organism>
<sequence>MIKELEDIFKEAEKDMKKAVEYYKNEIAGLRTSRASTALVEEIKVEYYGSKVPIKQLGTISVPEHNQIVIQVWDQNAVPAIEKAIREELNLNPTVQGNVIRVTLPPLTEERRRELVRLLHKITEEARVRVRNVRREAKEMIEELEGISEDEKKRALERLQKLTDKYIDEINKLMEAKEKEIMSV</sequence>
<name>RRF_AQUAE</name>
<feature type="chain" id="PRO_0000167400" description="Ribosome-recycling factor">
    <location>
        <begin position="1"/>
        <end position="184"/>
    </location>
</feature>
<feature type="helix" evidence="2">
    <location>
        <begin position="5"/>
        <end position="29"/>
    </location>
</feature>
<feature type="turn" evidence="2">
    <location>
        <begin position="37"/>
        <end position="39"/>
    </location>
</feature>
<feature type="strand" evidence="2">
    <location>
        <begin position="45"/>
        <end position="49"/>
    </location>
</feature>
<feature type="turn" evidence="2">
    <location>
        <begin position="54"/>
        <end position="57"/>
    </location>
</feature>
<feature type="strand" evidence="2">
    <location>
        <begin position="59"/>
        <end position="61"/>
    </location>
</feature>
<feature type="strand" evidence="2">
    <location>
        <begin position="63"/>
        <end position="71"/>
    </location>
</feature>
<feature type="strand" evidence="2">
    <location>
        <begin position="73"/>
        <end position="76"/>
    </location>
</feature>
<feature type="helix" evidence="2">
    <location>
        <begin position="77"/>
        <end position="89"/>
    </location>
</feature>
<feature type="strand" evidence="2">
    <location>
        <begin position="94"/>
        <end position="96"/>
    </location>
</feature>
<feature type="strand" evidence="2">
    <location>
        <begin position="99"/>
        <end position="103"/>
    </location>
</feature>
<feature type="helix" evidence="2">
    <location>
        <begin position="109"/>
        <end position="143"/>
    </location>
</feature>
<feature type="helix" evidence="2">
    <location>
        <begin position="149"/>
        <end position="181"/>
    </location>
</feature>
<gene>
    <name evidence="1" type="primary">frr</name>
    <name type="ordered locus">aq_712</name>
</gene>
<dbReference type="EMBL" id="AE000657">
    <property type="protein sequence ID" value="AAC06886.1"/>
    <property type="molecule type" value="Genomic_DNA"/>
</dbReference>
<dbReference type="PIR" id="D70362">
    <property type="entry name" value="D70362"/>
</dbReference>
<dbReference type="RefSeq" id="NP_213488.1">
    <property type="nucleotide sequence ID" value="NC_000918.1"/>
</dbReference>
<dbReference type="RefSeq" id="WP_010880426.1">
    <property type="nucleotide sequence ID" value="NC_000918.1"/>
</dbReference>
<dbReference type="PDB" id="1GE9">
    <property type="method" value="NMR"/>
    <property type="chains" value="A=1-184"/>
</dbReference>
<dbReference type="PDBsum" id="1GE9"/>
<dbReference type="SMR" id="O66928"/>
<dbReference type="FunCoup" id="O66928">
    <property type="interactions" value="477"/>
</dbReference>
<dbReference type="STRING" id="224324.aq_712"/>
<dbReference type="EnsemblBacteria" id="AAC06886">
    <property type="protein sequence ID" value="AAC06886"/>
    <property type="gene ID" value="aq_712"/>
</dbReference>
<dbReference type="KEGG" id="aae:aq_712"/>
<dbReference type="PATRIC" id="fig|224324.8.peg.570"/>
<dbReference type="eggNOG" id="COG0233">
    <property type="taxonomic scope" value="Bacteria"/>
</dbReference>
<dbReference type="HOGENOM" id="CLU_073981_2_1_0"/>
<dbReference type="InParanoid" id="O66928"/>
<dbReference type="OrthoDB" id="9804006at2"/>
<dbReference type="EvolutionaryTrace" id="O66928"/>
<dbReference type="Proteomes" id="UP000000798">
    <property type="component" value="Chromosome"/>
</dbReference>
<dbReference type="GO" id="GO:0005737">
    <property type="term" value="C:cytoplasm"/>
    <property type="evidence" value="ECO:0007669"/>
    <property type="project" value="UniProtKB-SubCell"/>
</dbReference>
<dbReference type="GO" id="GO:0043023">
    <property type="term" value="F:ribosomal large subunit binding"/>
    <property type="evidence" value="ECO:0000318"/>
    <property type="project" value="GO_Central"/>
</dbReference>
<dbReference type="GO" id="GO:0006412">
    <property type="term" value="P:translation"/>
    <property type="evidence" value="ECO:0000318"/>
    <property type="project" value="GO_Central"/>
</dbReference>
<dbReference type="GO" id="GO:0006415">
    <property type="term" value="P:translational termination"/>
    <property type="evidence" value="ECO:0007669"/>
    <property type="project" value="UniProtKB-UniRule"/>
</dbReference>
<dbReference type="CDD" id="cd00520">
    <property type="entry name" value="RRF"/>
    <property type="match status" value="1"/>
</dbReference>
<dbReference type="FunFam" id="1.10.132.20:FF:000001">
    <property type="entry name" value="Ribosome-recycling factor"/>
    <property type="match status" value="1"/>
</dbReference>
<dbReference type="FunFam" id="3.30.1360.40:FF:000001">
    <property type="entry name" value="Ribosome-recycling factor"/>
    <property type="match status" value="1"/>
</dbReference>
<dbReference type="Gene3D" id="3.30.1360.40">
    <property type="match status" value="1"/>
</dbReference>
<dbReference type="Gene3D" id="1.10.132.20">
    <property type="entry name" value="Ribosome-recycling factor"/>
    <property type="match status" value="1"/>
</dbReference>
<dbReference type="HAMAP" id="MF_00040">
    <property type="entry name" value="RRF"/>
    <property type="match status" value="1"/>
</dbReference>
<dbReference type="InterPro" id="IPR002661">
    <property type="entry name" value="Ribosome_recyc_fac"/>
</dbReference>
<dbReference type="InterPro" id="IPR023584">
    <property type="entry name" value="Ribosome_recyc_fac_dom"/>
</dbReference>
<dbReference type="InterPro" id="IPR036191">
    <property type="entry name" value="RRF_sf"/>
</dbReference>
<dbReference type="NCBIfam" id="TIGR00496">
    <property type="entry name" value="frr"/>
    <property type="match status" value="1"/>
</dbReference>
<dbReference type="PANTHER" id="PTHR20982:SF3">
    <property type="entry name" value="MITOCHONDRIAL RIBOSOME RECYCLING FACTOR PSEUDO 1"/>
    <property type="match status" value="1"/>
</dbReference>
<dbReference type="PANTHER" id="PTHR20982">
    <property type="entry name" value="RIBOSOME RECYCLING FACTOR"/>
    <property type="match status" value="1"/>
</dbReference>
<dbReference type="Pfam" id="PF01765">
    <property type="entry name" value="RRF"/>
    <property type="match status" value="1"/>
</dbReference>
<dbReference type="SUPFAM" id="SSF55194">
    <property type="entry name" value="Ribosome recycling factor, RRF"/>
    <property type="match status" value="1"/>
</dbReference>
<comment type="function">
    <text evidence="1">Responsible for the release of ribosomes from messenger RNA at the termination of protein biosynthesis. May increase the efficiency of translation by recycling ribosomes from one round of translation to another.</text>
</comment>
<comment type="subcellular location">
    <subcellularLocation>
        <location evidence="1">Cytoplasm</location>
    </subcellularLocation>
</comment>
<comment type="similarity">
    <text evidence="1">Belongs to the RRF family.</text>
</comment>